<sequence length="605" mass="68957">MKRIIFNFCFVWLAVSAFAGSKVVEMRNYGLVPDTHENLSPKLQKALQDIKSQVALGDKVTLLFESGRYDFHPEGAAVREYYISNHDQDNPKTVGFPLEDWKGLTVDGQGADFIFHGRMLPLSLLRSENCTLRNFSIDFETPHIAQVKILESGEEGITFEPAAWVKCRINEKGFFEAYGEGWSSAPQGGIAFEEKTKRLVYRTSDLWCPMEGVKEVSPRVYHAPQWKDARLKPGTVVALRTYYRPAPGIFLSNDKDTRLQNVKVHYAEGMGLLAQLCENITLDEFSVCLRGDKDPRYFTTQADATHFSSCRGKIDSRNGLYEGMMDDAINVHGTYLKIKQRLDDHTVIARYMHPQAYGFEWGVNGDEVQFVRSATMELTGGKNRVKEILPNDKDTVKGAKEYRITFAEPLDAEITDKEGFGIENLSWCPEVYFADNVIRNNRARGTLFSTPLKTVVERNLFDHTSGTAILLCGDCNGWFETGACRNVLIRNNRFINALTNMFQFTEAVISIYPEIPDLEHQKKYFHGGKGEKGVVIEDNYFETFDRPVLFAKSIDGLIFKNNVIRQNTDYPAFHHNKSRFRLLHTRNVKIEKNNFEDGDESIARE</sequence>
<feature type="signal peptide" evidence="2">
    <location>
        <begin position="1"/>
        <end position="19"/>
    </location>
</feature>
<feature type="chain" id="PRO_0000348480" description="Alpha-1,3-galactosidase B">
    <location>
        <begin position="20"/>
        <end position="605"/>
    </location>
</feature>
<feature type="repeat" description="PbH1 1">
    <location>
        <begin position="428"/>
        <end position="450"/>
    </location>
</feature>
<feature type="repeat" description="PbH1 2">
    <location>
        <begin position="451"/>
        <end position="473"/>
    </location>
</feature>
<feature type="repeat" description="PbH1 3">
    <location>
        <begin position="484"/>
        <end position="538"/>
    </location>
</feature>
<gene>
    <name type="primary">glaB2</name>
    <name type="ordered locus">BVU_2283</name>
</gene>
<comment type="function">
    <text evidence="1">Alpha-galactosidase. Removes both branched alpha-1,3-linked galactose residues of blood group B antigens and linear alpha-1,3-linked galactose structures.</text>
</comment>
<comment type="catalytic activity">
    <reaction evidence="1">
        <text>Hydrolysis of terminal, non-reducing branched (1-&gt;3)-alpha-D-galactosidic residues, producing free D-galactose.</text>
        <dbReference type="EC" id="3.2.1.n1"/>
    </reaction>
</comment>
<comment type="catalytic activity">
    <reaction evidence="1">
        <text>Hydrolysis of terminal, non-reducing linear (1-&gt;3)-alpha-D-galactosidic residues, producing free D-galactose.</text>
        <dbReference type="EC" id="3.2.1.n2"/>
    </reaction>
</comment>
<comment type="catalytic activity">
    <reaction evidence="1">
        <text>Hydrolysis of terminal, non-reducing alpha-D-galactose residues in alpha-D-galactosides, including galactose oligosaccharides, galactomannans and galactolipids.</text>
        <dbReference type="EC" id="3.2.1.22"/>
    </reaction>
</comment>
<comment type="similarity">
    <text evidence="3">Belongs to the glycosyl hydrolase 110 family. B subfamily.</text>
</comment>
<accession>A6L2M8</accession>
<protein>
    <recommendedName>
        <fullName>Alpha-1,3-galactosidase B</fullName>
        <ecNumber evidence="1">3.2.1.n1</ecNumber>
        <ecNumber evidence="1">3.2.1.n2</ecNumber>
    </recommendedName>
    <alternativeName>
        <fullName>Exo-alpha-galactosidase B2</fullName>
        <ecNumber evidence="1">3.2.1.22</ecNumber>
    </alternativeName>
</protein>
<evidence type="ECO:0000250" key="1">
    <source>
        <dbReference type="UniProtKB" id="Q5LGZ8"/>
    </source>
</evidence>
<evidence type="ECO:0000255" key="2"/>
<evidence type="ECO:0000305" key="3"/>
<proteinExistence type="inferred from homology"/>
<reference key="1">
    <citation type="journal article" date="2007" name="PLoS Biol.">
        <title>Evolution of symbiotic bacteria in the distal human intestine.</title>
        <authorList>
            <person name="Xu J."/>
            <person name="Mahowald M.A."/>
            <person name="Ley R.E."/>
            <person name="Lozupone C.A."/>
            <person name="Hamady M."/>
            <person name="Martens E.C."/>
            <person name="Henrissat B."/>
            <person name="Coutinho P.M."/>
            <person name="Minx P."/>
            <person name="Latreille P."/>
            <person name="Cordum H."/>
            <person name="Van Brunt A."/>
            <person name="Kim K."/>
            <person name="Fulton R.S."/>
            <person name="Fulton L.A."/>
            <person name="Clifton S.W."/>
            <person name="Wilson R.K."/>
            <person name="Knight R.D."/>
            <person name="Gordon J.I."/>
        </authorList>
    </citation>
    <scope>NUCLEOTIDE SEQUENCE [LARGE SCALE GENOMIC DNA]</scope>
    <source>
        <strain>ATCC 8482 / DSM 1447 / JCM 5826 / CCUG 4940 / NBRC 14291 / NCTC 11154</strain>
    </source>
</reference>
<keyword id="KW-0326">Glycosidase</keyword>
<keyword id="KW-0378">Hydrolase</keyword>
<keyword id="KW-0677">Repeat</keyword>
<keyword id="KW-0732">Signal</keyword>
<dbReference type="EC" id="3.2.1.n1" evidence="1"/>
<dbReference type="EC" id="3.2.1.n2" evidence="1"/>
<dbReference type="EC" id="3.2.1.22" evidence="1"/>
<dbReference type="EMBL" id="CP000139">
    <property type="protein sequence ID" value="ABR39942.1"/>
    <property type="molecule type" value="Genomic_DNA"/>
</dbReference>
<dbReference type="SMR" id="A6L2M8"/>
<dbReference type="STRING" id="435590.BVU_2283"/>
<dbReference type="CAZy" id="GH110">
    <property type="family name" value="Glycoside Hydrolase Family 110"/>
</dbReference>
<dbReference type="PaxDb" id="435590-BVU_2283"/>
<dbReference type="GeneID" id="5303247"/>
<dbReference type="KEGG" id="bvu:BVU_2283"/>
<dbReference type="eggNOG" id="COG5434">
    <property type="taxonomic scope" value="Bacteria"/>
</dbReference>
<dbReference type="HOGENOM" id="CLU_017693_0_0_10"/>
<dbReference type="BioCyc" id="BVUL435590:G1G59-2374-MONOMER"/>
<dbReference type="Proteomes" id="UP000002861">
    <property type="component" value="Chromosome"/>
</dbReference>
<dbReference type="GO" id="GO:0004557">
    <property type="term" value="F:alpha-galactosidase activity"/>
    <property type="evidence" value="ECO:0007669"/>
    <property type="project" value="UniProtKB-EC"/>
</dbReference>
<dbReference type="Gene3D" id="2.160.20.10">
    <property type="entry name" value="Single-stranded right-handed beta-helix, Pectin lyase-like"/>
    <property type="match status" value="1"/>
</dbReference>
<dbReference type="InterPro" id="IPR056441">
    <property type="entry name" value="Beta-barrel_GLAA-B_II"/>
</dbReference>
<dbReference type="InterPro" id="IPR012334">
    <property type="entry name" value="Pectin_lyas_fold"/>
</dbReference>
<dbReference type="InterPro" id="IPR011050">
    <property type="entry name" value="Pectin_lyase_fold/virulence"/>
</dbReference>
<dbReference type="Pfam" id="PF23763">
    <property type="entry name" value="Beta-barrel_GLAA-B_I"/>
    <property type="match status" value="1"/>
</dbReference>
<dbReference type="Pfam" id="PF23764">
    <property type="entry name" value="Beta-barrel_GLAA-B_II"/>
    <property type="match status" value="1"/>
</dbReference>
<dbReference type="SUPFAM" id="SSF51126">
    <property type="entry name" value="Pectin lyase-like"/>
    <property type="match status" value="1"/>
</dbReference>
<organism>
    <name type="scientific">Phocaeicola vulgatus (strain ATCC 8482 / DSM 1447 / JCM 5826 / CCUG 4940 / NBRC 14291 / NCTC 11154)</name>
    <name type="common">Bacteroides vulgatus</name>
    <dbReference type="NCBI Taxonomy" id="435590"/>
    <lineage>
        <taxon>Bacteria</taxon>
        <taxon>Pseudomonadati</taxon>
        <taxon>Bacteroidota</taxon>
        <taxon>Bacteroidia</taxon>
        <taxon>Bacteroidales</taxon>
        <taxon>Bacteroidaceae</taxon>
        <taxon>Phocaeicola</taxon>
    </lineage>
</organism>
<name>GLAB2_PHOV8</name>